<sequence>IWLWLGTAGMFLGMLYFIARGWGETDSRRQKFYIATILITAIAFVNYLAMALGFGLTIVEFAGEEHPIYWARYSDWLFTTPLLLYDLGLLAGADRNTITSLVSLDVLMIGTGLVATLSAGSGVLSAGAERLVWWGISTAFLLVLLYFLFSSLSGRVADLPSDTRSTFKTLRNLVTVVWLVYPVWWLIGTEGIGLVGIGIETAGFMVIDLTA</sequence>
<keyword id="KW-1003">Cell membrane</keyword>
<keyword id="KW-0157">Chromophore</keyword>
<keyword id="KW-0375">Hydrogen ion transport</keyword>
<keyword id="KW-0406">Ion transport</keyword>
<keyword id="KW-0472">Membrane</keyword>
<keyword id="KW-0600">Photoreceptor protein</keyword>
<keyword id="KW-0675">Receptor</keyword>
<keyword id="KW-0681">Retinal protein</keyword>
<keyword id="KW-0716">Sensory transduction</keyword>
<keyword id="KW-0812">Transmembrane</keyword>
<keyword id="KW-1133">Transmembrane helix</keyword>
<keyword id="KW-0813">Transport</keyword>
<reference key="1">
    <citation type="journal article" date="1992" name="J. Gen. Microbiol.">
        <title>The primary structures of helices A to G of three new bacteriorhodopsin-like retinal proteins.</title>
        <authorList>
            <person name="Otomo J."/>
            <person name="Urabe Y."/>
            <person name="Tomioka H."/>
            <person name="Sasabe H."/>
        </authorList>
    </citation>
    <scope>NUCLEOTIDE SEQUENCE [GENOMIC DNA]</scope>
</reference>
<comment type="function">
    <text>Light-driven proton pump.</text>
</comment>
<comment type="subcellular location">
    <subcellularLocation>
        <location>Cell membrane</location>
        <topology>Multi-pass membrane protein</topology>
    </subcellularLocation>
</comment>
<comment type="similarity">
    <text evidence="2">Belongs to the archaeal/bacterial/fungal opsin family.</text>
</comment>
<dbReference type="EMBL" id="D11057">
    <property type="protein sequence ID" value="BAA01800.1"/>
    <property type="molecule type" value="Genomic_DNA"/>
</dbReference>
<dbReference type="PIR" id="A47686">
    <property type="entry name" value="A47686"/>
</dbReference>
<dbReference type="SMR" id="P33971"/>
<dbReference type="GO" id="GO:0005886">
    <property type="term" value="C:plasma membrane"/>
    <property type="evidence" value="ECO:0007669"/>
    <property type="project" value="UniProtKB-SubCell"/>
</dbReference>
<dbReference type="GO" id="GO:0005216">
    <property type="term" value="F:monoatomic ion channel activity"/>
    <property type="evidence" value="ECO:0007669"/>
    <property type="project" value="InterPro"/>
</dbReference>
<dbReference type="GO" id="GO:0009881">
    <property type="term" value="F:photoreceptor activity"/>
    <property type="evidence" value="ECO:0007669"/>
    <property type="project" value="UniProtKB-KW"/>
</dbReference>
<dbReference type="GO" id="GO:0007602">
    <property type="term" value="P:phototransduction"/>
    <property type="evidence" value="ECO:0007669"/>
    <property type="project" value="UniProtKB-KW"/>
</dbReference>
<dbReference type="GO" id="GO:1902600">
    <property type="term" value="P:proton transmembrane transport"/>
    <property type="evidence" value="ECO:0007669"/>
    <property type="project" value="UniProtKB-KW"/>
</dbReference>
<dbReference type="Gene3D" id="1.20.1070.10">
    <property type="entry name" value="Rhodopsin 7-helix transmembrane proteins"/>
    <property type="match status" value="1"/>
</dbReference>
<dbReference type="InterPro" id="IPR001425">
    <property type="entry name" value="Arc/bac/fun_rhodopsins"/>
</dbReference>
<dbReference type="InterPro" id="IPR018229">
    <property type="entry name" value="Rhodopsin_retinal_BS"/>
</dbReference>
<dbReference type="PANTHER" id="PTHR28286">
    <property type="match status" value="1"/>
</dbReference>
<dbReference type="PANTHER" id="PTHR28286:SF2">
    <property type="entry name" value="BACTERIORHODOPSIN _OPSIN, NOPA (EUROFUNG)"/>
    <property type="match status" value="1"/>
</dbReference>
<dbReference type="Pfam" id="PF01036">
    <property type="entry name" value="Bac_rhodopsin"/>
    <property type="match status" value="1"/>
</dbReference>
<dbReference type="PRINTS" id="PR00251">
    <property type="entry name" value="BACTRLOPSIN"/>
</dbReference>
<dbReference type="SMART" id="SM01021">
    <property type="entry name" value="Bac_rhodopsin"/>
    <property type="match status" value="1"/>
</dbReference>
<dbReference type="SUPFAM" id="SSF81321">
    <property type="entry name" value="Family A G protein-coupled receptor-like"/>
    <property type="match status" value="1"/>
</dbReference>
<dbReference type="PROSITE" id="PS00950">
    <property type="entry name" value="BACTERIAL_OPSIN_1"/>
    <property type="match status" value="1"/>
</dbReference>
<organism>
    <name type="scientific">Halobacterium halobium (strain port)</name>
    <dbReference type="NCBI Taxonomy" id="33004"/>
    <lineage>
        <taxon>Archaea</taxon>
        <taxon>Methanobacteriati</taxon>
        <taxon>Methanobacteriota</taxon>
        <taxon>Stenosarchaea group</taxon>
        <taxon>Halobacteria</taxon>
        <taxon>Halobacteriales</taxon>
        <taxon>Halobacteriaceae</taxon>
        <taxon>Halobacterium</taxon>
    </lineage>
</organism>
<name>BACR_HALHP</name>
<accession>P33971</accession>
<gene>
    <name type="primary">bop</name>
</gene>
<evidence type="ECO:0000250" key="1"/>
<evidence type="ECO:0000305" key="2"/>
<protein>
    <recommendedName>
        <fullName>Bacteriorhodopsin</fullName>
        <shortName>BR</shortName>
    </recommendedName>
</protein>
<feature type="chain" id="PRO_0000196270" description="Bacteriorhodopsin">
    <location>
        <begin position="1" status="less than"/>
        <end position="211" status="greater than"/>
    </location>
</feature>
<feature type="transmembrane region" description="Helical; Name=Helix A" evidence="1">
    <location>
        <begin position="1"/>
        <end position="19"/>
    </location>
</feature>
<feature type="topological domain" description="Cytoplasmic" evidence="1">
    <location>
        <begin position="20"/>
        <end position="33"/>
    </location>
</feature>
<feature type="transmembrane region" description="Helical; Name=Helix B" evidence="1">
    <location>
        <begin position="34"/>
        <end position="52"/>
    </location>
</feature>
<feature type="topological domain" description="Extracellular" evidence="1">
    <location>
        <begin position="53"/>
        <end position="68"/>
    </location>
</feature>
<feature type="transmembrane region" description="Helical; Name=Helix C" evidence="1">
    <location>
        <begin position="69"/>
        <end position="86"/>
    </location>
</feature>
<feature type="topological domain" description="Cytoplasmic" evidence="1">
    <location>
        <begin position="87"/>
        <end position="97"/>
    </location>
</feature>
<feature type="transmembrane region" description="Helical; Name=Helix D" evidence="1">
    <location>
        <begin position="98"/>
        <end position="117"/>
    </location>
</feature>
<feature type="topological domain" description="Extracellular" evidence="1">
    <location>
        <begin position="118"/>
        <end position="130"/>
    </location>
</feature>
<feature type="transmembrane region" description="Helical; Name=Helix E" evidence="1">
    <location>
        <begin position="131"/>
        <end position="150"/>
    </location>
</feature>
<feature type="topological domain" description="Cytoplasmic" evidence="1">
    <location>
        <begin position="151"/>
        <end position="168"/>
    </location>
</feature>
<feature type="transmembrane region" description="Helical; Name=Helix F" evidence="1">
    <location>
        <begin position="169"/>
        <end position="187"/>
    </location>
</feature>
<feature type="topological domain" description="Extracellular" evidence="1">
    <location>
        <begin position="188"/>
        <end position="199"/>
    </location>
</feature>
<feature type="transmembrane region" description="Helical; Name=Helix G" evidence="1">
    <location>
        <begin position="200"/>
        <end position="211" status="greater than"/>
    </location>
</feature>
<feature type="site" description="Primary proton acceptor" evidence="1">
    <location>
        <position position="75"/>
    </location>
</feature>
<feature type="non-terminal residue">
    <location>
        <position position="1"/>
    </location>
</feature>
<feature type="non-terminal residue">
    <location>
        <position position="211"/>
    </location>
</feature>
<proteinExistence type="inferred from homology"/>